<evidence type="ECO:0000255" key="1">
    <source>
        <dbReference type="HAMAP-Rule" id="MF_00480"/>
    </source>
</evidence>
<evidence type="ECO:0000305" key="2"/>
<protein>
    <recommendedName>
        <fullName evidence="1">Small ribosomal subunit protein uS7</fullName>
    </recommendedName>
    <alternativeName>
        <fullName evidence="2">30S ribosomal protein S7</fullName>
    </alternativeName>
</protein>
<proteinExistence type="inferred from homology"/>
<accession>C5A203</accession>
<gene>
    <name evidence="1" type="primary">rps7</name>
    <name type="ordered locus">TGAM_1920</name>
</gene>
<reference key="1">
    <citation type="journal article" date="2007" name="Genome Biol.">
        <title>Genome analysis and genome-wide proteomics of Thermococcus gammatolerans, the most radioresistant organism known amongst the Archaea.</title>
        <authorList>
            <person name="Zivanovic Y."/>
            <person name="Armengaud J."/>
            <person name="Lagorce A."/>
            <person name="Leplat C."/>
            <person name="Guerin P."/>
            <person name="Dutertre M."/>
            <person name="Anthouard V."/>
            <person name="Forterre P."/>
            <person name="Wincker P."/>
            <person name="Confalonieri F."/>
        </authorList>
    </citation>
    <scope>NUCLEOTIDE SEQUENCE [LARGE SCALE GENOMIC DNA]</scope>
    <source>
        <strain>DSM 15229 / JCM 11827 / EJ3</strain>
    </source>
</reference>
<dbReference type="EMBL" id="CP001398">
    <property type="protein sequence ID" value="ACS34422.1"/>
    <property type="molecule type" value="Genomic_DNA"/>
</dbReference>
<dbReference type="RefSeq" id="WP_015859528.1">
    <property type="nucleotide sequence ID" value="NC_012804.1"/>
</dbReference>
<dbReference type="SMR" id="C5A203"/>
<dbReference type="STRING" id="593117.TGAM_1920"/>
<dbReference type="PaxDb" id="593117-TGAM_1920"/>
<dbReference type="GeneID" id="7988324"/>
<dbReference type="KEGG" id="tga:TGAM_1920"/>
<dbReference type="PATRIC" id="fig|593117.10.peg.1930"/>
<dbReference type="eggNOG" id="arCOG04254">
    <property type="taxonomic scope" value="Archaea"/>
</dbReference>
<dbReference type="HOGENOM" id="CLU_063975_0_0_2"/>
<dbReference type="OrthoDB" id="45346at2157"/>
<dbReference type="Proteomes" id="UP000001488">
    <property type="component" value="Chromosome"/>
</dbReference>
<dbReference type="GO" id="GO:0015935">
    <property type="term" value="C:small ribosomal subunit"/>
    <property type="evidence" value="ECO:0007669"/>
    <property type="project" value="InterPro"/>
</dbReference>
<dbReference type="GO" id="GO:0019843">
    <property type="term" value="F:rRNA binding"/>
    <property type="evidence" value="ECO:0007669"/>
    <property type="project" value="UniProtKB-UniRule"/>
</dbReference>
<dbReference type="GO" id="GO:0003735">
    <property type="term" value="F:structural constituent of ribosome"/>
    <property type="evidence" value="ECO:0007669"/>
    <property type="project" value="InterPro"/>
</dbReference>
<dbReference type="GO" id="GO:0006412">
    <property type="term" value="P:translation"/>
    <property type="evidence" value="ECO:0007669"/>
    <property type="project" value="UniProtKB-UniRule"/>
</dbReference>
<dbReference type="CDD" id="cd14867">
    <property type="entry name" value="uS7_Eukaryote"/>
    <property type="match status" value="1"/>
</dbReference>
<dbReference type="Gene3D" id="1.10.455.10">
    <property type="entry name" value="Ribosomal protein S7 domain"/>
    <property type="match status" value="1"/>
</dbReference>
<dbReference type="HAMAP" id="MF_00480_A">
    <property type="entry name" value="Ribosomal_uS7_A"/>
    <property type="match status" value="1"/>
</dbReference>
<dbReference type="InterPro" id="IPR000235">
    <property type="entry name" value="Ribosomal_uS7"/>
</dbReference>
<dbReference type="InterPro" id="IPR026018">
    <property type="entry name" value="Ribosomal_uS7_arc"/>
</dbReference>
<dbReference type="InterPro" id="IPR023798">
    <property type="entry name" value="Ribosomal_uS7_dom"/>
</dbReference>
<dbReference type="InterPro" id="IPR036823">
    <property type="entry name" value="Ribosomal_uS7_dom_sf"/>
</dbReference>
<dbReference type="InterPro" id="IPR005716">
    <property type="entry name" value="Ribosomal_uS7_euk/arc"/>
</dbReference>
<dbReference type="NCBIfam" id="NF003106">
    <property type="entry name" value="PRK04027.1"/>
    <property type="match status" value="1"/>
</dbReference>
<dbReference type="NCBIfam" id="TIGR01028">
    <property type="entry name" value="uS7_euk_arch"/>
    <property type="match status" value="1"/>
</dbReference>
<dbReference type="PANTHER" id="PTHR11205">
    <property type="entry name" value="RIBOSOMAL PROTEIN S7"/>
    <property type="match status" value="1"/>
</dbReference>
<dbReference type="Pfam" id="PF00177">
    <property type="entry name" value="Ribosomal_S7"/>
    <property type="match status" value="1"/>
</dbReference>
<dbReference type="PIRSF" id="PIRSF002122">
    <property type="entry name" value="RPS7p_RPS7a_RPS5e_RPS7o"/>
    <property type="match status" value="1"/>
</dbReference>
<dbReference type="SUPFAM" id="SSF47973">
    <property type="entry name" value="Ribosomal protein S7"/>
    <property type="match status" value="1"/>
</dbReference>
<sequence>MAKPLTERFFIPKELKVFGRWSVEDVTVNDPSLRPYIALEPRILPHSHGRHAKKPFGKAQVHIVERLINKVMRSGASHYKAGGHFMRREHRSIMSKKMKAYEVVKEAFMIIERRTKQNPIQVLIRAIENSAPREDTTTIAFGGIRYHMAVDVSPLRRLDVALKNIALGASIKCYRNKTTYAQALAEEIIAAANRDPKSFAYSKKEEIERIAQSSR</sequence>
<feature type="chain" id="PRO_1000206418" description="Small ribosomal subunit protein uS7">
    <location>
        <begin position="1"/>
        <end position="215"/>
    </location>
</feature>
<organism>
    <name type="scientific">Thermococcus gammatolerans (strain DSM 15229 / JCM 11827 / EJ3)</name>
    <dbReference type="NCBI Taxonomy" id="593117"/>
    <lineage>
        <taxon>Archaea</taxon>
        <taxon>Methanobacteriati</taxon>
        <taxon>Methanobacteriota</taxon>
        <taxon>Thermococci</taxon>
        <taxon>Thermococcales</taxon>
        <taxon>Thermococcaceae</taxon>
        <taxon>Thermococcus</taxon>
    </lineage>
</organism>
<name>RS7_THEGJ</name>
<keyword id="KW-1185">Reference proteome</keyword>
<keyword id="KW-0687">Ribonucleoprotein</keyword>
<keyword id="KW-0689">Ribosomal protein</keyword>
<keyword id="KW-0694">RNA-binding</keyword>
<keyword id="KW-0699">rRNA-binding</keyword>
<comment type="function">
    <text evidence="1">One of the primary rRNA binding proteins, it binds directly to 16S rRNA where it nucleates assembly of the head domain of the 30S subunit. Is located at the subunit interface close to the decoding center.</text>
</comment>
<comment type="subunit">
    <text evidence="1">Part of the 30S ribosomal subunit.</text>
</comment>
<comment type="similarity">
    <text evidence="1">Belongs to the universal ribosomal protein uS7 family.</text>
</comment>